<proteinExistence type="inferred from homology"/>
<comment type="function">
    <text evidence="1">RNA chaperone that binds small regulatory RNA (sRNAs) and mRNAs to facilitate mRNA translational regulation in response to envelope stress, environmental stress and changes in metabolite concentrations. Also binds with high specificity to tRNAs.</text>
</comment>
<comment type="subunit">
    <text evidence="1">Homohexamer.</text>
</comment>
<comment type="similarity">
    <text evidence="1">Belongs to the Hfq family.</text>
</comment>
<organism>
    <name type="scientific">Nitrosospira multiformis (strain ATCC 25196 / NCIMB 11849 / C 71)</name>
    <dbReference type="NCBI Taxonomy" id="323848"/>
    <lineage>
        <taxon>Bacteria</taxon>
        <taxon>Pseudomonadati</taxon>
        <taxon>Pseudomonadota</taxon>
        <taxon>Betaproteobacteria</taxon>
        <taxon>Nitrosomonadales</taxon>
        <taxon>Nitrosomonadaceae</taxon>
        <taxon>Nitrosospira</taxon>
    </lineage>
</organism>
<evidence type="ECO:0000255" key="1">
    <source>
        <dbReference type="HAMAP-Rule" id="MF_00436"/>
    </source>
</evidence>
<evidence type="ECO:0000255" key="2">
    <source>
        <dbReference type="PROSITE-ProRule" id="PRU01346"/>
    </source>
</evidence>
<reference key="1">
    <citation type="submission" date="2005-08" db="EMBL/GenBank/DDBJ databases">
        <title>Complete sequence of chromosome 1 of Nitrosospira multiformis ATCC 25196.</title>
        <authorList>
            <person name="Copeland A."/>
            <person name="Lucas S."/>
            <person name="Lapidus A."/>
            <person name="Barry K."/>
            <person name="Detter J.C."/>
            <person name="Glavina T."/>
            <person name="Hammon N."/>
            <person name="Israni S."/>
            <person name="Pitluck S."/>
            <person name="Chain P."/>
            <person name="Malfatti S."/>
            <person name="Shin M."/>
            <person name="Vergez L."/>
            <person name="Schmutz J."/>
            <person name="Larimer F."/>
            <person name="Land M."/>
            <person name="Hauser L."/>
            <person name="Kyrpides N."/>
            <person name="Lykidis A."/>
            <person name="Richardson P."/>
        </authorList>
    </citation>
    <scope>NUCLEOTIDE SEQUENCE [LARGE SCALE GENOMIC DNA]</scope>
    <source>
        <strain>ATCC 25196 / NCIMB 11849 / C 71</strain>
    </source>
</reference>
<feature type="chain" id="PRO_0000265169" description="RNA-binding protein Hfq">
    <location>
        <begin position="1"/>
        <end position="81"/>
    </location>
</feature>
<feature type="domain" description="Sm" evidence="2">
    <location>
        <begin position="10"/>
        <end position="69"/>
    </location>
</feature>
<sequence length="81" mass="9002">MSAKGQLLQDPFLNTLRKEHIPVSIYLVNGIKLQGHIDSFDQYVVLLKNTVTQMVYKHAISTVVPARAVNIPFEAPPISDA</sequence>
<dbReference type="EMBL" id="CP000103">
    <property type="protein sequence ID" value="ABB73755.1"/>
    <property type="molecule type" value="Genomic_DNA"/>
</dbReference>
<dbReference type="RefSeq" id="WP_011379809.1">
    <property type="nucleotide sequence ID" value="NC_007614.1"/>
</dbReference>
<dbReference type="SMR" id="Q2YBW6"/>
<dbReference type="STRING" id="323848.Nmul_A0447"/>
<dbReference type="KEGG" id="nmu:Nmul_A0447"/>
<dbReference type="eggNOG" id="COG1923">
    <property type="taxonomic scope" value="Bacteria"/>
</dbReference>
<dbReference type="HOGENOM" id="CLU_113688_2_2_4"/>
<dbReference type="OrthoDB" id="9799751at2"/>
<dbReference type="Proteomes" id="UP000002718">
    <property type="component" value="Chromosome"/>
</dbReference>
<dbReference type="GO" id="GO:0005829">
    <property type="term" value="C:cytosol"/>
    <property type="evidence" value="ECO:0007669"/>
    <property type="project" value="TreeGrafter"/>
</dbReference>
<dbReference type="GO" id="GO:0003723">
    <property type="term" value="F:RNA binding"/>
    <property type="evidence" value="ECO:0007669"/>
    <property type="project" value="UniProtKB-UniRule"/>
</dbReference>
<dbReference type="GO" id="GO:0006355">
    <property type="term" value="P:regulation of DNA-templated transcription"/>
    <property type="evidence" value="ECO:0007669"/>
    <property type="project" value="InterPro"/>
</dbReference>
<dbReference type="GO" id="GO:0043487">
    <property type="term" value="P:regulation of RNA stability"/>
    <property type="evidence" value="ECO:0007669"/>
    <property type="project" value="TreeGrafter"/>
</dbReference>
<dbReference type="GO" id="GO:0045974">
    <property type="term" value="P:regulation of translation, ncRNA-mediated"/>
    <property type="evidence" value="ECO:0007669"/>
    <property type="project" value="TreeGrafter"/>
</dbReference>
<dbReference type="CDD" id="cd01716">
    <property type="entry name" value="Hfq"/>
    <property type="match status" value="1"/>
</dbReference>
<dbReference type="FunFam" id="2.30.30.100:FF:000001">
    <property type="entry name" value="RNA-binding protein Hfq"/>
    <property type="match status" value="1"/>
</dbReference>
<dbReference type="Gene3D" id="2.30.30.100">
    <property type="match status" value="1"/>
</dbReference>
<dbReference type="HAMAP" id="MF_00436">
    <property type="entry name" value="Hfq"/>
    <property type="match status" value="1"/>
</dbReference>
<dbReference type="InterPro" id="IPR005001">
    <property type="entry name" value="Hfq"/>
</dbReference>
<dbReference type="InterPro" id="IPR010920">
    <property type="entry name" value="LSM_dom_sf"/>
</dbReference>
<dbReference type="InterPro" id="IPR047575">
    <property type="entry name" value="Sm"/>
</dbReference>
<dbReference type="NCBIfam" id="TIGR02383">
    <property type="entry name" value="Hfq"/>
    <property type="match status" value="1"/>
</dbReference>
<dbReference type="NCBIfam" id="NF001602">
    <property type="entry name" value="PRK00395.1"/>
    <property type="match status" value="1"/>
</dbReference>
<dbReference type="PANTHER" id="PTHR34772">
    <property type="entry name" value="RNA-BINDING PROTEIN HFQ"/>
    <property type="match status" value="1"/>
</dbReference>
<dbReference type="PANTHER" id="PTHR34772:SF1">
    <property type="entry name" value="RNA-BINDING PROTEIN HFQ"/>
    <property type="match status" value="1"/>
</dbReference>
<dbReference type="Pfam" id="PF17209">
    <property type="entry name" value="Hfq"/>
    <property type="match status" value="1"/>
</dbReference>
<dbReference type="SUPFAM" id="SSF50182">
    <property type="entry name" value="Sm-like ribonucleoproteins"/>
    <property type="match status" value="1"/>
</dbReference>
<dbReference type="PROSITE" id="PS52002">
    <property type="entry name" value="SM"/>
    <property type="match status" value="1"/>
</dbReference>
<keyword id="KW-1185">Reference proteome</keyword>
<keyword id="KW-0694">RNA-binding</keyword>
<keyword id="KW-0346">Stress response</keyword>
<protein>
    <recommendedName>
        <fullName evidence="1">RNA-binding protein Hfq</fullName>
    </recommendedName>
</protein>
<name>HFQ_NITMU</name>
<accession>Q2YBW6</accession>
<gene>
    <name evidence="1" type="primary">hfq</name>
    <name type="ordered locus">Nmul_A0447</name>
</gene>